<evidence type="ECO:0000269" key="1">
    <source>
    </source>
</evidence>
<evidence type="ECO:0000269" key="2">
    <source>
    </source>
</evidence>
<evidence type="ECO:0000303" key="3">
    <source>
    </source>
</evidence>
<evidence type="ECO:0000305" key="4">
    <source>
    </source>
</evidence>
<evidence type="ECO:0000312" key="5">
    <source>
        <dbReference type="EMBL" id="ABF92433.1"/>
    </source>
</evidence>
<dbReference type="EMBL" id="CP000113">
    <property type="protein sequence ID" value="ABF92433.1"/>
    <property type="molecule type" value="Genomic_DNA"/>
</dbReference>
<dbReference type="SMR" id="Q1D3H1"/>
<dbReference type="STRING" id="246197.MXAN_4636"/>
<dbReference type="EnsemblBacteria" id="ABF92433">
    <property type="protein sequence ID" value="ABF92433"/>
    <property type="gene ID" value="MXAN_4636"/>
</dbReference>
<dbReference type="KEGG" id="mxa:MXAN_4636"/>
<dbReference type="eggNOG" id="COG1664">
    <property type="taxonomic scope" value="Bacteria"/>
</dbReference>
<dbReference type="HOGENOM" id="CLU_072799_4_3_7"/>
<dbReference type="Proteomes" id="UP000002402">
    <property type="component" value="Chromosome"/>
</dbReference>
<dbReference type="GO" id="GO:0005737">
    <property type="term" value="C:cytoplasm"/>
    <property type="evidence" value="ECO:0007669"/>
    <property type="project" value="UniProtKB-KW"/>
</dbReference>
<dbReference type="GO" id="GO:0005856">
    <property type="term" value="C:cytoskeleton"/>
    <property type="evidence" value="ECO:0007669"/>
    <property type="project" value="UniProtKB-SubCell"/>
</dbReference>
<dbReference type="GO" id="GO:0007059">
    <property type="term" value="P:chromosome segregation"/>
    <property type="evidence" value="ECO:0007669"/>
    <property type="project" value="UniProtKB-KW"/>
</dbReference>
<dbReference type="InterPro" id="IPR007607">
    <property type="entry name" value="BacA/B"/>
</dbReference>
<dbReference type="PANTHER" id="PTHR35024">
    <property type="entry name" value="HYPOTHETICAL CYTOSOLIC PROTEIN"/>
    <property type="match status" value="1"/>
</dbReference>
<dbReference type="PANTHER" id="PTHR35024:SF4">
    <property type="entry name" value="POLYMER-FORMING CYTOSKELETAL PROTEIN"/>
    <property type="match status" value="1"/>
</dbReference>
<dbReference type="Pfam" id="PF04519">
    <property type="entry name" value="Bactofilin"/>
    <property type="match status" value="1"/>
</dbReference>
<sequence>MSFTPRTARHTPFERRTTLMANTVIGSSIVIDGEISGDEDLVIQGTVKGKISLKESLYVEGSGVVEADIETQNVEIAGRVTGNIVASDKVELKTDCRVVGDIKAPRILIADGASFKGNVDMDMKER</sequence>
<comment type="function">
    <text evidence="1">A non-essential component of the chromosome segregation machinery (PubMed:29180656). Positions the ParA-ParB-parS chromosome segregation machinery within the cell; BacP seems to be the most important bactofilin in this process (PubMed:29180656). Forms a heteropolymeric, subpolar scaffold in the cell; BacP probably forms the core, BacO contributes to position and integrity while BacN does not seem to contribute to assembly (PubMed:29180656).</text>
</comment>
<comment type="subunit">
    <text evidence="1">Interacts with BacN and probably also BacP, the 3 proteins colocalize as an extended structure (PubMed:29180656). Interacts with PadC (PubMed:29180656).</text>
</comment>
<comment type="subcellular location">
    <subcellularLocation>
        <location evidence="1">Cytoplasm</location>
        <location evidence="1">Cytoskeleton</location>
    </subcellularLocation>
    <text evidence="1">Forms subpolar patches 1-2 um in length; 1 mature patch and one nascent patch in new cells. As cells elongate the nascent patch grows and a new one assembles at midcell, which splits upon division (PubMed:29180656). The patches colocalize with ParB (PubMed:29180656).</text>
</comment>
<comment type="disruption phenotype">
    <text evidence="1 2">BacP, ParA and ParB-parS are less organized forming smaller, more dispersed patches, PadC still forms foci which are mislocalized (PubMed:29180656). In a triple bacN-bacO-bacP deletion ParA, ParB-parS and PadC are also mislocalized, nucleoids are more compact, DNA origin regions are mislocalized, DNA content increases (PubMed:29180656, PubMed:32738827). The triple bacNOP deletion is synthetically lethal with smc or double scpAB deletions (PubMed:32738827).</text>
</comment>
<comment type="similarity">
    <text evidence="4">Belongs to the bactofilin family.</text>
</comment>
<keyword id="KW-0159">Chromosome partition</keyword>
<keyword id="KW-0963">Cytoplasm</keyword>
<keyword id="KW-0206">Cytoskeleton</keyword>
<keyword id="KW-1185">Reference proteome</keyword>
<organism>
    <name type="scientific">Myxococcus xanthus (strain DK1622)</name>
    <dbReference type="NCBI Taxonomy" id="246197"/>
    <lineage>
        <taxon>Bacteria</taxon>
        <taxon>Pseudomonadati</taxon>
        <taxon>Myxococcota</taxon>
        <taxon>Myxococcia</taxon>
        <taxon>Myxococcales</taxon>
        <taxon>Cystobacterineae</taxon>
        <taxon>Myxococcaceae</taxon>
        <taxon>Myxococcus</taxon>
    </lineage>
</organism>
<proteinExistence type="evidence at protein level"/>
<protein>
    <recommendedName>
        <fullName evidence="3">Bactofilin BacO</fullName>
    </recommendedName>
</protein>
<gene>
    <name evidence="3" type="primary">bacO</name>
    <name evidence="5" type="ordered locus">MXAN_4636</name>
</gene>
<reference evidence="5" key="1">
    <citation type="journal article" date="2006" name="Proc. Natl. Acad. Sci. U.S.A.">
        <title>Evolution of sensory complexity recorded in a myxobacterial genome.</title>
        <authorList>
            <person name="Goldman B.S."/>
            <person name="Nierman W.C."/>
            <person name="Kaiser D."/>
            <person name="Slater S.C."/>
            <person name="Durkin A.S."/>
            <person name="Eisen J.A."/>
            <person name="Ronning C.M."/>
            <person name="Barbazuk W.B."/>
            <person name="Blanchard M."/>
            <person name="Field C."/>
            <person name="Halling C."/>
            <person name="Hinkle G."/>
            <person name="Iartchuk O."/>
            <person name="Kim H.S."/>
            <person name="Mackenzie C."/>
            <person name="Madupu R."/>
            <person name="Miller N."/>
            <person name="Shvartsbeyn A."/>
            <person name="Sullivan S.A."/>
            <person name="Vaudin M."/>
            <person name="Wiegand R."/>
            <person name="Kaplan H.B."/>
        </authorList>
    </citation>
    <scope>NUCLEOTIDE SEQUENCE [LARGE SCALE GENOMIC DNA]</scope>
    <source>
        <strain>DK1622</strain>
    </source>
</reference>
<reference key="2">
    <citation type="journal article" date="2017" name="Nat. Commun.">
        <title>Bactofilin-mediated organization of the ParABS chromosome segregation system in Myxococcus xanthus.</title>
        <authorList>
            <person name="Lin L."/>
            <person name="Osorio Valeriano M."/>
            <person name="Harms A."/>
            <person name="Soegaard-Andersen L."/>
            <person name="Thanbichler M."/>
        </authorList>
    </citation>
    <scope>FUNCTION</scope>
    <scope>SUBUNIT</scope>
    <scope>SUBCELLULAR LOCATION</scope>
    <scope>DISRUPTION PHENOTYPE</scope>
    <source>
        <strain>DK1622</strain>
    </source>
</reference>
<reference key="3">
    <citation type="journal article" date="2020" name="Mol. Microbiol.">
        <title>SMC and the bactofilin/PadC scaffold have distinct yet redundant functions in chromosome segregation and organization in Myxococcus xanthus.</title>
        <authorList>
            <person name="Anand D."/>
            <person name="Schumacher D."/>
            <person name="Soegaard-Andersen L."/>
        </authorList>
    </citation>
    <scope>DISRUPTION PHENOTYPE</scope>
    <source>
        <strain>DK1622</strain>
    </source>
</reference>
<name>BACO_MYXXD</name>
<accession>Q1D3H1</accession>
<feature type="chain" id="PRO_0000460328" description="Bactofilin BacO">
    <location>
        <begin position="1"/>
        <end position="126"/>
    </location>
</feature>